<proteinExistence type="evidence at protein level"/>
<reference key="1">
    <citation type="journal article" date="1991" name="Proc. Natl. Acad. Sci. U.S.A.">
        <title>Alternative splicing contributes to K+ channel diversity in the mammalian central nervous system.</title>
        <authorList>
            <person name="Luneau C.J."/>
            <person name="Williams J.B."/>
            <person name="Marshall J."/>
            <person name="Levitan E.S."/>
            <person name="Oliva C."/>
            <person name="Smith J.S."/>
            <person name="Antanavage J."/>
            <person name="Folander K."/>
            <person name="Stein R.B."/>
            <person name="Swanson R."/>
            <person name="Kaczmarek L.K."/>
            <person name="Buhrow S.A."/>
        </authorList>
    </citation>
    <scope>NUCLEOTIDE SEQUENCE [MRNA]</scope>
    <scope>FUNCTION</scope>
    <scope>TRANSPORTER ACTIVITY</scope>
</reference>
<reference key="2">
    <citation type="journal article" date="1992" name="EMBO J.">
        <title>Characterization of a Shaw-related potassium channel family in rat brain.</title>
        <authorList>
            <person name="Rettig J."/>
            <person name="Wunder F."/>
            <person name="Stocker M."/>
            <person name="Lichtinghagen R."/>
            <person name="Mastiaux F."/>
            <person name="Beckh S."/>
            <person name="Kues W."/>
            <person name="Pedarzani P."/>
            <person name="Schroeter K.H."/>
            <person name="Ruppersberg J.P."/>
            <person name="Veh R."/>
            <person name="Pongs O."/>
        </authorList>
    </citation>
    <scope>NUCLEOTIDE SEQUENCE [MRNA]</scope>
    <scope>FUNCTION</scope>
    <scope>TRANSPORTER ACTIVITY</scope>
    <scope>TISSUE SPECIFICITY</scope>
</reference>
<reference key="3">
    <citation type="journal article" date="1999" name="J. Neurophysiol.">
        <title>Kv3.1-Kv3.2 channels underlie a high-voltage-activating component of the delayed rectifier K+ current in projecting neurons from the globus pallidus.</title>
        <authorList>
            <person name="Hernandez-Pineda R."/>
            <person name="Chow A."/>
            <person name="Amarillo Y."/>
            <person name="Moreno H."/>
            <person name="Saganich M."/>
            <person name="Vega-Saenz de Miera E.C."/>
            <person name="Hernandez-Cruz A."/>
            <person name="Rudy B."/>
        </authorList>
    </citation>
    <scope>FUNCTION</scope>
    <scope>TRANSPORTER ACTIVITY</scope>
    <scope>SUBUNIT</scope>
    <scope>INTERACTION WITH KCNC2</scope>
    <scope>SUBCELLULAR LOCATION</scope>
    <scope>TISSUE SPECIFICITY</scope>
</reference>
<reference key="4">
    <citation type="journal article" date="2004" name="J. Biol. Chem.">
        <title>MinK, MiRP1, and MiRP2 diversify Kv3.1 and Kv3.2 potassium channel gating.</title>
        <authorList>
            <person name="Lewis A."/>
            <person name="McCrossan Z.A."/>
            <person name="Abbott G.W."/>
        </authorList>
    </citation>
    <scope>FUNCTION</scope>
    <scope>TRANSPORTER ACTIVITY</scope>
    <scope>SUBUNIT</scope>
    <scope>INTERACTION WITH KCNC2; KCNE1 AND KCNE2</scope>
    <scope>SUBCELLULAR LOCATION</scope>
</reference>
<reference key="5">
    <citation type="journal article" date="2010" name="Histochem. Cell Biol.">
        <title>Precise localization of the voltage-gated potassium channel subunits Kv3.1b and Kv3.3 revealed in the molecular layer of the rat cerebellar cortex by a pre-embedding immunogold method.</title>
        <authorList>
            <person name="Puente N."/>
            <person name="Mendizabal-Zubiaga J."/>
            <person name="Elezgarai I."/>
            <person name="Reguero L."/>
            <person name="Buceta I."/>
            <person name="Grandes P."/>
        </authorList>
    </citation>
    <scope>SUBCELLULAR LOCATION</scope>
    <scope>TISSUE SPECIFICITY</scope>
</reference>
<reference key="6">
    <citation type="journal article" date="2012" name="Nat. Commun.">
        <title>Quantitative maps of protein phosphorylation sites across 14 different rat organs and tissues.</title>
        <authorList>
            <person name="Lundby A."/>
            <person name="Secher A."/>
            <person name="Lage K."/>
            <person name="Nordsborg N.B."/>
            <person name="Dmytriyev A."/>
            <person name="Lundby C."/>
            <person name="Olsen J.V."/>
        </authorList>
    </citation>
    <scope>PHOSPHORYLATION [LARGE SCALE ANALYSIS] AT SER-44; SER-130; SER-142; SER-158 AND SER-160</scope>
    <scope>IDENTIFICATION BY MASS SPECTROMETRY [LARGE SCALE ANALYSIS]</scope>
</reference>
<reference key="7">
    <citation type="journal article" date="2014" name="Biochim. Biophys. Acta">
        <title>N-Linked glycan site occupancy impacts the distribution of a potassium channel in the cell body and outgrowths of neuronal-derived cells.</title>
        <authorList>
            <person name="Hall M.K."/>
            <person name="Weidner D.A."/>
            <person name="Bernetski C.J."/>
            <person name="Schwalbe R.A."/>
        </authorList>
    </citation>
    <scope>SUBCELLULAR LOCATION</scope>
    <scope>GLYCOSYLATION AT ASN-220 AND ASN-229</scope>
    <scope>MUTAGENESIS OF ASN-220 AND ASN-229</scope>
</reference>
<gene>
    <name evidence="14" type="primary">Kcnc1</name>
</gene>
<comment type="function">
    <text evidence="6 7 8 13">Voltage-gated potassium channel that opens in response to the voltage difference across the membrane and through which potassium ions pass in accordance with their electrochemical gradient (Probable) (PubMed:10482766, PubMed:1378392, PubMed:14679187). The mechanism is time-dependent and inactivation is slow (PubMed:10482766, PubMed:1378392). Plays an important role in the rapid repolarization of fast-firing brain neurons (PubMed:10482766). Can form functional homotetrameric channels and heterotetrameric channels that contain variable proportions of KCNC2, and possibly other family members as well (PubMed:10482766, PubMed:14679187). Contributes to fire sustained trains of very brief action potentials at high frequency in pallidal neurons (PubMed:10482766).</text>
</comment>
<comment type="catalytic activity">
    <reaction evidence="6 7 8 13">
        <text>K(+)(in) = K(+)(out)</text>
        <dbReference type="Rhea" id="RHEA:29463"/>
        <dbReference type="ChEBI" id="CHEBI:29103"/>
    </reaction>
</comment>
<comment type="subunit">
    <text evidence="1 3 6 8">Homotetramer. Homomultimer (By similarity). Heteromultimer with KCNG3, KCNG4 and KCNV2 (By similarity). Heteromultimer with KCNC2 (PubMed:10482766, PubMed:14679187). Heterotetramer with KCNC3 (By similarity). Interacts with the ancillary subunits KCNE1 and KCNE2; the interaction modulates channel activity (PubMed:14679187).</text>
</comment>
<comment type="subcellular location">
    <subcellularLocation>
        <location evidence="6 8 10">Cell membrane</location>
        <topology evidence="4">Multi-pass membrane protein</topology>
    </subcellularLocation>
    <subcellularLocation>
        <location evidence="9">Cell projection</location>
        <location evidence="9">Axon</location>
    </subcellularLocation>
    <subcellularLocation>
        <location evidence="9">Presynaptic cell membrane</location>
    </subcellularLocation>
    <text evidence="9">Localizes in parallel fiber membranes, distributed on the perisynaptic and extrasynaptic membranes away from the active zones.</text>
</comment>
<comment type="alternative products">
    <event type="alternative splicing"/>
    <isoform>
        <id>P25122-1</id>
        <name>1</name>
        <sequence type="displayed"/>
    </isoform>
    <isoform>
        <id>P25122-2</id>
        <name>2</name>
        <name>Short</name>
        <sequence type="described" ref="VSP_001016 VSP_001017"/>
    </isoform>
</comment>
<comment type="tissue specificity">
    <text evidence="6 7 9">Expressed in brain (PubMed:1378392). Expressed in globus pallidal neurons of the basal ganglia (at protein level) (PubMed:10482766). Detected on Purkinje cells in the cerebellum molecular layer (at protein level) (PubMed:20857303).</text>
</comment>
<comment type="domain">
    <text evidence="11">The segment S4 is probably the voltage-sensor and is characterized by a series of positively charged amino acids at every third position.</text>
</comment>
<comment type="domain">
    <text evidence="3">The N-terminal cytoplasmic T1 domain is involved but not required for Zn(2+)-mediated tetramerization.</text>
</comment>
<comment type="PTM">
    <text evidence="10">N-glycosylated; contains sialylated glycans.</text>
</comment>
<comment type="similarity">
    <text evidence="11">Belongs to the potassium channel family. C (Shaw) (TC 1.A.1.2) subfamily. Kv3.1/KCNC1 sub-subfamily.</text>
</comment>
<dbReference type="EMBL" id="M68880">
    <property type="protein sequence ID" value="AAA41501.1"/>
    <property type="molecule type" value="mRNA"/>
</dbReference>
<dbReference type="EMBL" id="X62840">
    <property type="protein sequence ID" value="CAA44644.1"/>
    <property type="molecule type" value="mRNA"/>
</dbReference>
<dbReference type="PIR" id="A39395">
    <property type="entry name" value="A39395"/>
</dbReference>
<dbReference type="RefSeq" id="NP_036988.1">
    <molecule id="P25122-1"/>
    <property type="nucleotide sequence ID" value="NM_012856.3"/>
</dbReference>
<dbReference type="SMR" id="P25122"/>
<dbReference type="BioGRID" id="247366">
    <property type="interactions" value="1"/>
</dbReference>
<dbReference type="CORUM" id="P25122"/>
<dbReference type="FunCoup" id="P25122">
    <property type="interactions" value="1719"/>
</dbReference>
<dbReference type="STRING" id="10116.ENSRNOP00000074146"/>
<dbReference type="BindingDB" id="P25122"/>
<dbReference type="ChEMBL" id="CHEMBL2321617"/>
<dbReference type="DrugCentral" id="P25122"/>
<dbReference type="GuidetoPHARMACOLOGY" id="548"/>
<dbReference type="GlyCosmos" id="P25122">
    <property type="glycosylation" value="2 sites, No reported glycans"/>
</dbReference>
<dbReference type="GlyGen" id="P25122">
    <property type="glycosylation" value="2 sites"/>
</dbReference>
<dbReference type="iPTMnet" id="P25122"/>
<dbReference type="PhosphoSitePlus" id="P25122"/>
<dbReference type="PaxDb" id="10116-ENSRNOP00000015260"/>
<dbReference type="ABCD" id="P25122">
    <property type="antibodies" value="1 sequenced antibody"/>
</dbReference>
<dbReference type="Ensembl" id="ENSRNOT00000089488.2">
    <molecule id="P25122-1"/>
    <property type="protein sequence ID" value="ENSRNOP00000074146.1"/>
    <property type="gene ID" value="ENSRNOG00000055401.2"/>
</dbReference>
<dbReference type="GeneID" id="25327"/>
<dbReference type="KEGG" id="rno:25327"/>
<dbReference type="UCSC" id="RGD:2955">
    <molecule id="P25122-1"/>
    <property type="organism name" value="rat"/>
</dbReference>
<dbReference type="AGR" id="RGD:2955"/>
<dbReference type="CTD" id="3746"/>
<dbReference type="RGD" id="2955">
    <property type="gene designation" value="Kcnc1"/>
</dbReference>
<dbReference type="eggNOG" id="KOG3713">
    <property type="taxonomic scope" value="Eukaryota"/>
</dbReference>
<dbReference type="GeneTree" id="ENSGT00940000156912"/>
<dbReference type="HOGENOM" id="CLU_011722_4_3_1"/>
<dbReference type="InParanoid" id="P25122"/>
<dbReference type="OMA" id="QTQSWAL"/>
<dbReference type="OrthoDB" id="10025005at2759"/>
<dbReference type="PhylomeDB" id="P25122"/>
<dbReference type="Reactome" id="R-RNO-1296072">
    <property type="pathway name" value="Voltage gated Potassium channels"/>
</dbReference>
<dbReference type="PRO" id="PR:P25122"/>
<dbReference type="Proteomes" id="UP000002494">
    <property type="component" value="Chromosome 1"/>
</dbReference>
<dbReference type="Bgee" id="ENSRNOG00000055401">
    <property type="expression patterns" value="Expressed in cerebellum and 7 other cell types or tissues"/>
</dbReference>
<dbReference type="GO" id="GO:0030673">
    <property type="term" value="C:axolemma"/>
    <property type="evidence" value="ECO:0000266"/>
    <property type="project" value="RGD"/>
</dbReference>
<dbReference type="GO" id="GO:0043679">
    <property type="term" value="C:axon terminus"/>
    <property type="evidence" value="ECO:0000318"/>
    <property type="project" value="GO_Central"/>
</dbReference>
<dbReference type="GO" id="GO:0044305">
    <property type="term" value="C:calyx of Held"/>
    <property type="evidence" value="ECO:0000314"/>
    <property type="project" value="SynGO"/>
</dbReference>
<dbReference type="GO" id="GO:0009986">
    <property type="term" value="C:cell surface"/>
    <property type="evidence" value="ECO:0000314"/>
    <property type="project" value="RGD"/>
</dbReference>
<dbReference type="GO" id="GO:0030425">
    <property type="term" value="C:dendrite"/>
    <property type="evidence" value="ECO:0000314"/>
    <property type="project" value="RGD"/>
</dbReference>
<dbReference type="GO" id="GO:0032590">
    <property type="term" value="C:dendrite membrane"/>
    <property type="evidence" value="ECO:0000266"/>
    <property type="project" value="RGD"/>
</dbReference>
<dbReference type="GO" id="GO:0032589">
    <property type="term" value="C:neuron projection membrane"/>
    <property type="evidence" value="ECO:0000314"/>
    <property type="project" value="RGD"/>
</dbReference>
<dbReference type="GO" id="GO:0043025">
    <property type="term" value="C:neuronal cell body"/>
    <property type="evidence" value="ECO:0000314"/>
    <property type="project" value="RGD"/>
</dbReference>
<dbReference type="GO" id="GO:0032809">
    <property type="term" value="C:neuronal cell body membrane"/>
    <property type="evidence" value="ECO:0000314"/>
    <property type="project" value="UniProtKB"/>
</dbReference>
<dbReference type="GO" id="GO:0045211">
    <property type="term" value="C:postsynaptic membrane"/>
    <property type="evidence" value="ECO:0000314"/>
    <property type="project" value="SynGO"/>
</dbReference>
<dbReference type="GO" id="GO:0042734">
    <property type="term" value="C:presynaptic membrane"/>
    <property type="evidence" value="ECO:0000314"/>
    <property type="project" value="SynGO"/>
</dbReference>
<dbReference type="GO" id="GO:0008076">
    <property type="term" value="C:voltage-gated potassium channel complex"/>
    <property type="evidence" value="ECO:0000314"/>
    <property type="project" value="UniProtKB"/>
</dbReference>
<dbReference type="GO" id="GO:0005251">
    <property type="term" value="F:delayed rectifier potassium channel activity"/>
    <property type="evidence" value="ECO:0000314"/>
    <property type="project" value="UniProtKB"/>
</dbReference>
<dbReference type="GO" id="GO:0019894">
    <property type="term" value="F:kinesin binding"/>
    <property type="evidence" value="ECO:0000266"/>
    <property type="project" value="RGD"/>
</dbReference>
<dbReference type="GO" id="GO:0046872">
    <property type="term" value="F:metal ion binding"/>
    <property type="evidence" value="ECO:0007669"/>
    <property type="project" value="UniProtKB-KW"/>
</dbReference>
<dbReference type="GO" id="GO:0044325">
    <property type="term" value="F:transmembrane transporter binding"/>
    <property type="evidence" value="ECO:0000353"/>
    <property type="project" value="UniProtKB"/>
</dbReference>
<dbReference type="GO" id="GO:0099508">
    <property type="term" value="F:voltage-gated monoatomic ion channel activity involved in regulation of presynaptic membrane potential"/>
    <property type="evidence" value="ECO:0000314"/>
    <property type="project" value="SynGO"/>
</dbReference>
<dbReference type="GO" id="GO:0005249">
    <property type="term" value="F:voltage-gated potassium channel activity"/>
    <property type="evidence" value="ECO:0000250"/>
    <property type="project" value="UniProtKB"/>
</dbReference>
<dbReference type="GO" id="GO:0001508">
    <property type="term" value="P:action potential"/>
    <property type="evidence" value="ECO:0000318"/>
    <property type="project" value="GO_Central"/>
</dbReference>
<dbReference type="GO" id="GO:0071466">
    <property type="term" value="P:cellular response to xenobiotic stimulus"/>
    <property type="evidence" value="ECO:0000270"/>
    <property type="project" value="RGD"/>
</dbReference>
<dbReference type="GO" id="GO:0021549">
    <property type="term" value="P:cerebellum development"/>
    <property type="evidence" value="ECO:0000270"/>
    <property type="project" value="RGD"/>
</dbReference>
<dbReference type="GO" id="GO:0022038">
    <property type="term" value="P:corpus callosum development"/>
    <property type="evidence" value="ECO:0000270"/>
    <property type="project" value="RGD"/>
</dbReference>
<dbReference type="GO" id="GO:0021759">
    <property type="term" value="P:globus pallidus development"/>
    <property type="evidence" value="ECO:0000270"/>
    <property type="project" value="RGD"/>
</dbReference>
<dbReference type="GO" id="GO:0021554">
    <property type="term" value="P:optic nerve development"/>
    <property type="evidence" value="ECO:0000270"/>
    <property type="project" value="RGD"/>
</dbReference>
<dbReference type="GO" id="GO:0034767">
    <property type="term" value="P:positive regulation of monoatomic ion transmembrane transport"/>
    <property type="evidence" value="ECO:0000314"/>
    <property type="project" value="RGD"/>
</dbReference>
<dbReference type="GO" id="GO:1901381">
    <property type="term" value="P:positive regulation of potassium ion transmembrane transport"/>
    <property type="evidence" value="ECO:0000314"/>
    <property type="project" value="RGD"/>
</dbReference>
<dbReference type="GO" id="GO:0071805">
    <property type="term" value="P:potassium ion transmembrane transport"/>
    <property type="evidence" value="ECO:0000314"/>
    <property type="project" value="UniProtKB"/>
</dbReference>
<dbReference type="GO" id="GO:0051260">
    <property type="term" value="P:protein homooligomerization"/>
    <property type="evidence" value="ECO:0007669"/>
    <property type="project" value="InterPro"/>
</dbReference>
<dbReference type="GO" id="GO:0051262">
    <property type="term" value="P:protein tetramerization"/>
    <property type="evidence" value="ECO:0000250"/>
    <property type="project" value="UniProtKB"/>
</dbReference>
<dbReference type="GO" id="GO:0034765">
    <property type="term" value="P:regulation of monoatomic ion transmembrane transport"/>
    <property type="evidence" value="ECO:0000315"/>
    <property type="project" value="RGD"/>
</dbReference>
<dbReference type="GO" id="GO:1901379">
    <property type="term" value="P:regulation of potassium ion transmembrane transport"/>
    <property type="evidence" value="ECO:0000314"/>
    <property type="project" value="RGD"/>
</dbReference>
<dbReference type="GO" id="GO:0014075">
    <property type="term" value="P:response to amine"/>
    <property type="evidence" value="ECO:0000270"/>
    <property type="project" value="RGD"/>
</dbReference>
<dbReference type="GO" id="GO:0010996">
    <property type="term" value="P:response to auditory stimulus"/>
    <property type="evidence" value="ECO:0000270"/>
    <property type="project" value="RGD"/>
</dbReference>
<dbReference type="GO" id="GO:0071774">
    <property type="term" value="P:response to fibroblast growth factor"/>
    <property type="evidence" value="ECO:0000270"/>
    <property type="project" value="RGD"/>
</dbReference>
<dbReference type="GO" id="GO:0009642">
    <property type="term" value="P:response to light intensity"/>
    <property type="evidence" value="ECO:0000270"/>
    <property type="project" value="RGD"/>
</dbReference>
<dbReference type="GO" id="GO:1990089">
    <property type="term" value="P:response to nerve growth factor"/>
    <property type="evidence" value="ECO:0000270"/>
    <property type="project" value="RGD"/>
</dbReference>
<dbReference type="GO" id="GO:0035864">
    <property type="term" value="P:response to potassium ion"/>
    <property type="evidence" value="ECO:0000270"/>
    <property type="project" value="RGD"/>
</dbReference>
<dbReference type="GO" id="GO:0009636">
    <property type="term" value="P:response to toxic substance"/>
    <property type="evidence" value="ECO:0000270"/>
    <property type="project" value="RGD"/>
</dbReference>
<dbReference type="CDD" id="cd18414">
    <property type="entry name" value="BTB_KCNC1_3"/>
    <property type="match status" value="1"/>
</dbReference>
<dbReference type="FunFam" id="1.10.287.70:FF:000011">
    <property type="entry name" value="Potassium channel, voltage-gated Shaw-related subfamily C, member 4"/>
    <property type="match status" value="1"/>
</dbReference>
<dbReference type="FunFam" id="1.20.120.350:FF:000014">
    <property type="entry name" value="Potassium channel, voltage-gated Shaw-related subfamily C, member 4"/>
    <property type="match status" value="1"/>
</dbReference>
<dbReference type="FunFam" id="3.30.710.10:FF:000002">
    <property type="entry name" value="Potassium voltage-gated channel subfamily C member 2"/>
    <property type="match status" value="1"/>
</dbReference>
<dbReference type="Gene3D" id="1.10.287.70">
    <property type="match status" value="1"/>
</dbReference>
<dbReference type="Gene3D" id="3.30.710.10">
    <property type="entry name" value="Potassium Channel Kv1.1, Chain A"/>
    <property type="match status" value="1"/>
</dbReference>
<dbReference type="Gene3D" id="1.20.120.350">
    <property type="entry name" value="Voltage-gated potassium channels. Chain C"/>
    <property type="match status" value="1"/>
</dbReference>
<dbReference type="InterPro" id="IPR000210">
    <property type="entry name" value="BTB/POZ_dom"/>
</dbReference>
<dbReference type="InterPro" id="IPR005821">
    <property type="entry name" value="Ion_trans_dom"/>
</dbReference>
<dbReference type="InterPro" id="IPR003968">
    <property type="entry name" value="K_chnl_volt-dep_Kv"/>
</dbReference>
<dbReference type="InterPro" id="IPR003974">
    <property type="entry name" value="K_chnl_volt-dep_Kv3"/>
</dbReference>
<dbReference type="InterPro" id="IPR005403">
    <property type="entry name" value="K_chnl_volt-dep_Kv3.1"/>
</dbReference>
<dbReference type="InterPro" id="IPR011333">
    <property type="entry name" value="SKP1/BTB/POZ_sf"/>
</dbReference>
<dbReference type="InterPro" id="IPR003131">
    <property type="entry name" value="T1-type_BTB"/>
</dbReference>
<dbReference type="InterPro" id="IPR028325">
    <property type="entry name" value="VG_K_chnl"/>
</dbReference>
<dbReference type="InterPro" id="IPR027359">
    <property type="entry name" value="Volt_channel_dom_sf"/>
</dbReference>
<dbReference type="PANTHER" id="PTHR11537:SF87">
    <property type="entry name" value="POTASSIUM VOLTAGE-GATED CHANNEL SUBFAMILY C MEMBER 1"/>
    <property type="match status" value="1"/>
</dbReference>
<dbReference type="PANTHER" id="PTHR11537">
    <property type="entry name" value="VOLTAGE-GATED POTASSIUM CHANNEL"/>
    <property type="match status" value="1"/>
</dbReference>
<dbReference type="Pfam" id="PF02214">
    <property type="entry name" value="BTB_2"/>
    <property type="match status" value="1"/>
</dbReference>
<dbReference type="Pfam" id="PF00520">
    <property type="entry name" value="Ion_trans"/>
    <property type="match status" value="1"/>
</dbReference>
<dbReference type="PRINTS" id="PR00169">
    <property type="entry name" value="KCHANNEL"/>
</dbReference>
<dbReference type="PRINTS" id="PR01581">
    <property type="entry name" value="KV31CHANNEL"/>
</dbReference>
<dbReference type="PRINTS" id="PR01491">
    <property type="entry name" value="KVCHANNEL"/>
</dbReference>
<dbReference type="PRINTS" id="PR01498">
    <property type="entry name" value="SHAWCHANNEL"/>
</dbReference>
<dbReference type="SMART" id="SM00225">
    <property type="entry name" value="BTB"/>
    <property type="match status" value="1"/>
</dbReference>
<dbReference type="SUPFAM" id="SSF54695">
    <property type="entry name" value="POZ domain"/>
    <property type="match status" value="1"/>
</dbReference>
<dbReference type="SUPFAM" id="SSF81324">
    <property type="entry name" value="Voltage-gated potassium channels"/>
    <property type="match status" value="1"/>
</dbReference>
<keyword id="KW-0025">Alternative splicing</keyword>
<keyword id="KW-1003">Cell membrane</keyword>
<keyword id="KW-0966">Cell projection</keyword>
<keyword id="KW-0325">Glycoprotein</keyword>
<keyword id="KW-0407">Ion channel</keyword>
<keyword id="KW-0406">Ion transport</keyword>
<keyword id="KW-0472">Membrane</keyword>
<keyword id="KW-0479">Metal-binding</keyword>
<keyword id="KW-0597">Phosphoprotein</keyword>
<keyword id="KW-0630">Potassium</keyword>
<keyword id="KW-0631">Potassium channel</keyword>
<keyword id="KW-0633">Potassium transport</keyword>
<keyword id="KW-1185">Reference proteome</keyword>
<keyword id="KW-0770">Synapse</keyword>
<keyword id="KW-0812">Transmembrane</keyword>
<keyword id="KW-1133">Transmembrane helix</keyword>
<keyword id="KW-0813">Transport</keyword>
<keyword id="KW-0851">Voltage-gated channel</keyword>
<keyword id="KW-0862">Zinc</keyword>
<evidence type="ECO:0000250" key="1"/>
<evidence type="ECO:0000250" key="2">
    <source>
        <dbReference type="UniProtKB" id="P15388"/>
    </source>
</evidence>
<evidence type="ECO:0000250" key="3">
    <source>
        <dbReference type="UniProtKB" id="P48547"/>
    </source>
</evidence>
<evidence type="ECO:0000255" key="4"/>
<evidence type="ECO:0000256" key="5">
    <source>
        <dbReference type="SAM" id="MobiDB-lite"/>
    </source>
</evidence>
<evidence type="ECO:0000269" key="6">
    <source>
    </source>
</evidence>
<evidence type="ECO:0000269" key="7">
    <source>
    </source>
</evidence>
<evidence type="ECO:0000269" key="8">
    <source>
    </source>
</evidence>
<evidence type="ECO:0000269" key="9">
    <source>
    </source>
</evidence>
<evidence type="ECO:0000269" key="10">
    <source>
    </source>
</evidence>
<evidence type="ECO:0000305" key="11"/>
<evidence type="ECO:0000305" key="12">
    <source>
    </source>
</evidence>
<evidence type="ECO:0000305" key="13">
    <source>
    </source>
</evidence>
<evidence type="ECO:0000312" key="14">
    <source>
        <dbReference type="RGD" id="2955"/>
    </source>
</evidence>
<evidence type="ECO:0007744" key="15">
    <source>
    </source>
</evidence>
<name>KCNC1_RAT</name>
<protein>
    <recommendedName>
        <fullName evidence="11">Voltage-gated potassium channel KCNC1</fullName>
    </recommendedName>
    <alternativeName>
        <fullName evidence="3">NGK2</fullName>
    </alternativeName>
    <alternativeName>
        <fullName>Potassium voltage-gated channel subfamily C member 1</fullName>
    </alternativeName>
    <alternativeName>
        <fullName>RAW2</fullName>
    </alternativeName>
    <alternativeName>
        <fullName evidence="12">Voltage-gated potassium channel subunit Kv3.1</fullName>
    </alternativeName>
    <alternativeName>
        <fullName evidence="3">Voltage-gated potassium channel subunit Kv4</fullName>
    </alternativeName>
</protein>
<sequence length="585" mass="65857">MGQGDESERIVINVGGTRHQTYRSTLRTLPGTRLAWLAEPDAHSHFDYDPRADEFFFDRHPGVFAHILNYYRTGKLHCPADVCGPLYEEELAFWGIDETDVEPCCWMTYRQHRDAEEALDSFGGAPLDNSADDADADGPGDSGDGEDELEMTKRLALSDSPDGRPGGFWRRWQPRIWALFEDPYSSRYARYVAFASLFFILVSITTFCLETHERFNPIVNKTEIENVRNGTQVRYYREAETEAFLTYIEGVCVVWFTFEFLMRVVFCPNKVEFIKNSLNIIDFVAILPFYLEVGLSGLSSKAAKDVLGFLRVVRFVRILRIFKLTRHFVGLRVLGHTLRASTNEFLLLIIFLALGVLIFATMIYYAERIGAQPNDPSASEHTHFKNIPIGFWWAVVTMTTLGYGDMYPQTWSGMLVGALCALAGVLTIAMPVPVIVNNFGMYYSLAMAKQKLPKKKKKHIPRPPQLGSPNYCKSVVNSPHHSTQSDTCPLAQEEILEINRADSKLNGEVAKAALANEDCPHIDQALTPDEGLPFTRSGTRERYGPCFLLSTGEYACPPGGGMRKDLCKESPVIAKYMPTEAVRVT</sequence>
<accession>P25122</accession>
<feature type="chain" id="PRO_0000054053" description="Voltage-gated potassium channel KCNC1">
    <location>
        <begin position="1"/>
        <end position="585"/>
    </location>
</feature>
<feature type="topological domain" description="Cytoplasmic" evidence="4">
    <location>
        <begin position="1"/>
        <end position="190"/>
    </location>
</feature>
<feature type="transmembrane region" description="Helical; Name=Segment S1" evidence="4">
    <location>
        <begin position="191"/>
        <end position="209"/>
    </location>
</feature>
<feature type="transmembrane region" description="Helical; Name=Segment S2" evidence="4">
    <location>
        <begin position="248"/>
        <end position="267"/>
    </location>
</feature>
<feature type="topological domain" description="Cytoplasmic" evidence="4">
    <location>
        <begin position="268"/>
        <end position="276"/>
    </location>
</feature>
<feature type="transmembrane region" description="Helical; Name=Segment S3" evidence="4">
    <location>
        <begin position="277"/>
        <end position="295"/>
    </location>
</feature>
<feature type="transmembrane region" description="Helical; Voltage-sensor; Name=Segment S4" evidence="4">
    <location>
        <begin position="309"/>
        <end position="331"/>
    </location>
</feature>
<feature type="topological domain" description="Cytoplasmic" evidence="4">
    <location>
        <begin position="332"/>
        <end position="344"/>
    </location>
</feature>
<feature type="transmembrane region" description="Helical; Name=Segment S5" evidence="4">
    <location>
        <begin position="345"/>
        <end position="366"/>
    </location>
</feature>
<feature type="transmembrane region" description="Helical; Name=Segment S6" evidence="4">
    <location>
        <begin position="415"/>
        <end position="436"/>
    </location>
</feature>
<feature type="topological domain" description="Cytoplasmic" evidence="4">
    <location>
        <begin position="437"/>
        <end position="585"/>
    </location>
</feature>
<feature type="region of interest" description="Disordered" evidence="5">
    <location>
        <begin position="121"/>
        <end position="147"/>
    </location>
</feature>
<feature type="short sequence motif" description="Selectivity filter" evidence="1">
    <location>
        <begin position="400"/>
        <end position="405"/>
    </location>
</feature>
<feature type="compositionally biased region" description="Acidic residues" evidence="5">
    <location>
        <begin position="130"/>
        <end position="147"/>
    </location>
</feature>
<feature type="binding site" evidence="3">
    <location>
        <position position="77"/>
    </location>
    <ligand>
        <name>Zn(2+)</name>
        <dbReference type="ChEBI" id="CHEBI:29105"/>
    </ligand>
</feature>
<feature type="binding site" evidence="3">
    <location>
        <position position="83"/>
    </location>
    <ligand>
        <name>Zn(2+)</name>
        <dbReference type="ChEBI" id="CHEBI:29105"/>
    </ligand>
</feature>
<feature type="binding site" evidence="3">
    <location>
        <position position="104"/>
    </location>
    <ligand>
        <name>Zn(2+)</name>
        <dbReference type="ChEBI" id="CHEBI:29105"/>
    </ligand>
</feature>
<feature type="binding site" evidence="3">
    <location>
        <position position="105"/>
    </location>
    <ligand>
        <name>Zn(2+)</name>
        <dbReference type="ChEBI" id="CHEBI:29105"/>
    </ligand>
</feature>
<feature type="binding site" evidence="3">
    <location>
        <position position="400"/>
    </location>
    <ligand>
        <name>K(+)</name>
        <dbReference type="ChEBI" id="CHEBI:29103"/>
        <note>ligand shared between homotetrameric partners</note>
    </ligand>
</feature>
<feature type="binding site" evidence="3">
    <location>
        <position position="401"/>
    </location>
    <ligand>
        <name>K(+)</name>
        <dbReference type="ChEBI" id="CHEBI:29103"/>
        <note>ligand shared between homotetrameric partners</note>
    </ligand>
</feature>
<feature type="binding site" evidence="3">
    <location>
        <position position="402"/>
    </location>
    <ligand>
        <name>K(+)</name>
        <dbReference type="ChEBI" id="CHEBI:29103"/>
        <note>ligand shared between homotetrameric partners</note>
    </ligand>
</feature>
<feature type="binding site" evidence="3">
    <location>
        <position position="403"/>
    </location>
    <ligand>
        <name>K(+)</name>
        <dbReference type="ChEBI" id="CHEBI:29103"/>
        <note>ligand shared between homotetrameric partners</note>
    </ligand>
</feature>
<feature type="modified residue" description="Phosphoserine" evidence="15">
    <location>
        <position position="44"/>
    </location>
</feature>
<feature type="modified residue" description="Phosphoserine" evidence="15">
    <location>
        <position position="130"/>
    </location>
</feature>
<feature type="modified residue" description="Phosphoserine" evidence="15">
    <location>
        <position position="142"/>
    </location>
</feature>
<feature type="modified residue" description="Phosphoserine" evidence="15">
    <location>
        <position position="158"/>
    </location>
</feature>
<feature type="modified residue" description="Phosphoserine" evidence="15">
    <location>
        <position position="160"/>
    </location>
</feature>
<feature type="modified residue" description="Phosphoserine" evidence="2">
    <location>
        <position position="474"/>
    </location>
</feature>
<feature type="modified residue" description="Phosphothreonine" evidence="2">
    <location>
        <position position="483"/>
    </location>
</feature>
<feature type="glycosylation site" description="N-linked (GlcNAc...) asparagine" evidence="4 10">
    <location>
        <position position="220"/>
    </location>
</feature>
<feature type="glycosylation site" description="N-linked (GlcNAc...) asparagine" evidence="4 10">
    <location>
        <position position="229"/>
    </location>
</feature>
<feature type="splice variant" id="VSP_001016" description="In isoform 2." evidence="11">
    <original>DSKLNGEVAK</original>
    <variation>GRKPLRGMSI</variation>
    <location>
        <begin position="502"/>
        <end position="511"/>
    </location>
</feature>
<feature type="splice variant" id="VSP_001017" description="In isoform 2." evidence="11">
    <location>
        <begin position="512"/>
        <end position="585"/>
    </location>
</feature>
<feature type="mutagenesis site" description="Reduces extent of N-glycosylation. Abolishes N-glycosylation; when associated with Q-229." evidence="10">
    <original>N</original>
    <variation>Q</variation>
    <location>
        <position position="220"/>
    </location>
</feature>
<feature type="mutagenesis site" description="Reduces extent of N-glycosylation. Abolishes N-glycosylation; when associated with Q-220." evidence="10">
    <original>N</original>
    <variation>Q</variation>
    <location>
        <position position="229"/>
    </location>
</feature>
<organism>
    <name type="scientific">Rattus norvegicus</name>
    <name type="common">Rat</name>
    <dbReference type="NCBI Taxonomy" id="10116"/>
    <lineage>
        <taxon>Eukaryota</taxon>
        <taxon>Metazoa</taxon>
        <taxon>Chordata</taxon>
        <taxon>Craniata</taxon>
        <taxon>Vertebrata</taxon>
        <taxon>Euteleostomi</taxon>
        <taxon>Mammalia</taxon>
        <taxon>Eutheria</taxon>
        <taxon>Euarchontoglires</taxon>
        <taxon>Glires</taxon>
        <taxon>Rodentia</taxon>
        <taxon>Myomorpha</taxon>
        <taxon>Muroidea</taxon>
        <taxon>Muridae</taxon>
        <taxon>Murinae</taxon>
        <taxon>Rattus</taxon>
    </lineage>
</organism>